<gene>
    <name evidence="1" type="primary">tyrS1</name>
    <name type="synonym">tyrS</name>
    <name type="ORF">HMPREF9496_00499</name>
</gene>
<evidence type="ECO:0000255" key="1">
    <source>
        <dbReference type="HAMAP-Rule" id="MF_02006"/>
    </source>
</evidence>
<evidence type="ECO:0000305" key="2"/>
<sequence>MNIIDELAWRDAINQQTNEEGLRELTENTSISLYCGVDPTGDSMHIGHLIPFMMMKRFQLAGHHPYILIGGGTGTIGDPSGRTTERVLQTMEAVQHNVDSLSNQMKKLFGKDAEVTMVNNYDWLSELSLLDFLRDYGKNFNVNTMLAKDIVASRLESGISFTEFTYQILQSIDFYTLHKKHNIQLQIGGADQWGNITAGLDLIRKKEGPEAKVFGLTIPLMLKADGTKFGKTAGGAIWLDPKKTSPFEFYQFWLNQDDRDVIKYLKFFTFLDKEEIDALAEKVEKEPGKREAQRRLAEEVTRFVHDDAALEEAQKISEALFSGNIKDLTIEEIEQGLEHVPTVEITKDAKNIVDWLVDTEIEPSKRQAREDVSGGAISINGDRVTDLDFAVDPTQHFDGKFVVVRKGKKNYFLAKVMD</sequence>
<keyword id="KW-0030">Aminoacyl-tRNA synthetase</keyword>
<keyword id="KW-0067">ATP-binding</keyword>
<keyword id="KW-0963">Cytoplasm</keyword>
<keyword id="KW-0436">Ligase</keyword>
<keyword id="KW-0547">Nucleotide-binding</keyword>
<keyword id="KW-0648">Protein biosynthesis</keyword>
<keyword id="KW-0694">RNA-binding</keyword>
<accession>E6ELF6</accession>
<accession>Q838D7</accession>
<accession>Q8KXD3</accession>
<comment type="function">
    <text evidence="1">Catalyzes the attachment of tyrosine to tRNA(Tyr) in a two-step reaction: tyrosine is first activated by ATP to form Tyr-AMP and then transferred to the acceptor end of tRNA(Tyr).</text>
</comment>
<comment type="catalytic activity">
    <reaction evidence="1">
        <text>tRNA(Tyr) + L-tyrosine + ATP = L-tyrosyl-tRNA(Tyr) + AMP + diphosphate + H(+)</text>
        <dbReference type="Rhea" id="RHEA:10220"/>
        <dbReference type="Rhea" id="RHEA-COMP:9706"/>
        <dbReference type="Rhea" id="RHEA-COMP:9707"/>
        <dbReference type="ChEBI" id="CHEBI:15378"/>
        <dbReference type="ChEBI" id="CHEBI:30616"/>
        <dbReference type="ChEBI" id="CHEBI:33019"/>
        <dbReference type="ChEBI" id="CHEBI:58315"/>
        <dbReference type="ChEBI" id="CHEBI:78442"/>
        <dbReference type="ChEBI" id="CHEBI:78536"/>
        <dbReference type="ChEBI" id="CHEBI:456215"/>
        <dbReference type="EC" id="6.1.1.1"/>
    </reaction>
</comment>
<comment type="subunit">
    <text evidence="1">Homodimer.</text>
</comment>
<comment type="subcellular location">
    <subcellularLocation>
        <location evidence="1">Cytoplasm</location>
    </subcellularLocation>
</comment>
<comment type="similarity">
    <text evidence="1">Belongs to the class-I aminoacyl-tRNA synthetase family. TyrS type 1 subfamily.</text>
</comment>
<comment type="sequence caution" evidence="2">
    <conflict type="erroneous initiation">
        <sequence resource="EMBL-CDS" id="AAM46083"/>
    </conflict>
    <text>Extended N-terminus.</text>
</comment>
<comment type="sequence caution" evidence="2">
    <conflict type="erroneous initiation">
        <sequence resource="EMBL-CDS" id="EFT42488"/>
    </conflict>
    <text>Extended N-terminus.</text>
</comment>
<feature type="chain" id="PRO_0000422422" description="Tyrosine--tRNA ligase 1">
    <location>
        <begin position="1"/>
        <end position="418"/>
    </location>
</feature>
<feature type="domain" description="S4 RNA-binding" evidence="1">
    <location>
        <begin position="350"/>
        <end position="416"/>
    </location>
</feature>
<feature type="short sequence motif" description="'HIGH' region">
    <location>
        <begin position="39"/>
        <end position="48"/>
    </location>
</feature>
<feature type="short sequence motif" description="'KMSKS' region">
    <location>
        <begin position="228"/>
        <end position="232"/>
    </location>
</feature>
<feature type="binding site" evidence="1">
    <location>
        <position position="34"/>
    </location>
    <ligand>
        <name>L-tyrosine</name>
        <dbReference type="ChEBI" id="CHEBI:58315"/>
    </ligand>
</feature>
<feature type="binding site" evidence="1">
    <location>
        <position position="166"/>
    </location>
    <ligand>
        <name>L-tyrosine</name>
        <dbReference type="ChEBI" id="CHEBI:58315"/>
    </ligand>
</feature>
<feature type="binding site" evidence="1">
    <location>
        <position position="170"/>
    </location>
    <ligand>
        <name>L-tyrosine</name>
        <dbReference type="ChEBI" id="CHEBI:58315"/>
    </ligand>
</feature>
<feature type="binding site" evidence="1">
    <location>
        <position position="231"/>
    </location>
    <ligand>
        <name>ATP</name>
        <dbReference type="ChEBI" id="CHEBI:30616"/>
    </ligand>
</feature>
<organism>
    <name type="scientific">Enterococcus faecalis (strain TX4000 / JH2-2)</name>
    <dbReference type="NCBI Taxonomy" id="749493"/>
    <lineage>
        <taxon>Bacteria</taxon>
        <taxon>Bacillati</taxon>
        <taxon>Bacillota</taxon>
        <taxon>Bacilli</taxon>
        <taxon>Lactobacillales</taxon>
        <taxon>Enterococcaceae</taxon>
        <taxon>Enterococcus</taxon>
    </lineage>
</organism>
<name>SYY1_ENTFT</name>
<dbReference type="EC" id="6.1.1.1" evidence="1"/>
<dbReference type="EMBL" id="AF354231">
    <property type="protein sequence ID" value="AAM46083.1"/>
    <property type="status" value="ALT_INIT"/>
    <property type="molecule type" value="Genomic_DNA"/>
</dbReference>
<dbReference type="EMBL" id="AEBB01000015">
    <property type="protein sequence ID" value="EFT42488.1"/>
    <property type="status" value="ALT_INIT"/>
    <property type="molecule type" value="Genomic_DNA"/>
</dbReference>
<dbReference type="RefSeq" id="WP_002355444.1">
    <property type="nucleotide sequence ID" value="NZ_GL476258.1"/>
</dbReference>
<dbReference type="SMR" id="E6ELF6"/>
<dbReference type="GeneID" id="60892922"/>
<dbReference type="PATRIC" id="fig|749493.3.peg.471"/>
<dbReference type="HOGENOM" id="CLU_024003_0_3_9"/>
<dbReference type="GO" id="GO:0005829">
    <property type="term" value="C:cytosol"/>
    <property type="evidence" value="ECO:0007669"/>
    <property type="project" value="TreeGrafter"/>
</dbReference>
<dbReference type="GO" id="GO:0005524">
    <property type="term" value="F:ATP binding"/>
    <property type="evidence" value="ECO:0007669"/>
    <property type="project" value="UniProtKB-UniRule"/>
</dbReference>
<dbReference type="GO" id="GO:0003723">
    <property type="term" value="F:RNA binding"/>
    <property type="evidence" value="ECO:0007669"/>
    <property type="project" value="UniProtKB-KW"/>
</dbReference>
<dbReference type="GO" id="GO:0004831">
    <property type="term" value="F:tyrosine-tRNA ligase activity"/>
    <property type="evidence" value="ECO:0007669"/>
    <property type="project" value="UniProtKB-UniRule"/>
</dbReference>
<dbReference type="GO" id="GO:0006437">
    <property type="term" value="P:tyrosyl-tRNA aminoacylation"/>
    <property type="evidence" value="ECO:0007669"/>
    <property type="project" value="UniProtKB-UniRule"/>
</dbReference>
<dbReference type="CDD" id="cd00165">
    <property type="entry name" value="S4"/>
    <property type="match status" value="1"/>
</dbReference>
<dbReference type="CDD" id="cd00805">
    <property type="entry name" value="TyrRS_core"/>
    <property type="match status" value="1"/>
</dbReference>
<dbReference type="FunFam" id="1.10.240.10:FF:000001">
    <property type="entry name" value="Tyrosine--tRNA ligase"/>
    <property type="match status" value="1"/>
</dbReference>
<dbReference type="FunFam" id="3.40.50.620:FF:000008">
    <property type="entry name" value="Tyrosine--tRNA ligase"/>
    <property type="match status" value="1"/>
</dbReference>
<dbReference type="Gene3D" id="3.40.50.620">
    <property type="entry name" value="HUPs"/>
    <property type="match status" value="1"/>
</dbReference>
<dbReference type="Gene3D" id="3.10.290.10">
    <property type="entry name" value="RNA-binding S4 domain"/>
    <property type="match status" value="1"/>
</dbReference>
<dbReference type="Gene3D" id="1.10.240.10">
    <property type="entry name" value="Tyrosyl-Transfer RNA Synthetase"/>
    <property type="match status" value="1"/>
</dbReference>
<dbReference type="HAMAP" id="MF_02006">
    <property type="entry name" value="Tyr_tRNA_synth_type1"/>
    <property type="match status" value="1"/>
</dbReference>
<dbReference type="InterPro" id="IPR001412">
    <property type="entry name" value="aa-tRNA-synth_I_CS"/>
</dbReference>
<dbReference type="InterPro" id="IPR002305">
    <property type="entry name" value="aa-tRNA-synth_Ic"/>
</dbReference>
<dbReference type="InterPro" id="IPR014729">
    <property type="entry name" value="Rossmann-like_a/b/a_fold"/>
</dbReference>
<dbReference type="InterPro" id="IPR036986">
    <property type="entry name" value="S4_RNA-bd_sf"/>
</dbReference>
<dbReference type="InterPro" id="IPR054608">
    <property type="entry name" value="SYY-like_C"/>
</dbReference>
<dbReference type="InterPro" id="IPR002307">
    <property type="entry name" value="Tyr-tRNA-ligase"/>
</dbReference>
<dbReference type="InterPro" id="IPR024088">
    <property type="entry name" value="Tyr-tRNA-ligase_bac-type"/>
</dbReference>
<dbReference type="InterPro" id="IPR024107">
    <property type="entry name" value="Tyr-tRNA-ligase_bac_1"/>
</dbReference>
<dbReference type="NCBIfam" id="TIGR00234">
    <property type="entry name" value="tyrS"/>
    <property type="match status" value="1"/>
</dbReference>
<dbReference type="PANTHER" id="PTHR11766:SF0">
    <property type="entry name" value="TYROSINE--TRNA LIGASE, MITOCHONDRIAL"/>
    <property type="match status" value="1"/>
</dbReference>
<dbReference type="PANTHER" id="PTHR11766">
    <property type="entry name" value="TYROSYL-TRNA SYNTHETASE"/>
    <property type="match status" value="1"/>
</dbReference>
<dbReference type="Pfam" id="PF22421">
    <property type="entry name" value="SYY_C-terminal"/>
    <property type="match status" value="1"/>
</dbReference>
<dbReference type="Pfam" id="PF00579">
    <property type="entry name" value="tRNA-synt_1b"/>
    <property type="match status" value="1"/>
</dbReference>
<dbReference type="PRINTS" id="PR01040">
    <property type="entry name" value="TRNASYNTHTYR"/>
</dbReference>
<dbReference type="SUPFAM" id="SSF55174">
    <property type="entry name" value="Alpha-L RNA-binding motif"/>
    <property type="match status" value="1"/>
</dbReference>
<dbReference type="SUPFAM" id="SSF52374">
    <property type="entry name" value="Nucleotidylyl transferase"/>
    <property type="match status" value="1"/>
</dbReference>
<dbReference type="PROSITE" id="PS00178">
    <property type="entry name" value="AA_TRNA_LIGASE_I"/>
    <property type="match status" value="1"/>
</dbReference>
<dbReference type="PROSITE" id="PS50889">
    <property type="entry name" value="S4"/>
    <property type="match status" value="1"/>
</dbReference>
<reference key="1">
    <citation type="journal article" date="2002" name="Appl. Environ. Microbiol.">
        <title>Identification of the Enterococcus faecalis tyrosine decarboxylase operon involved in tyramine production.</title>
        <authorList>
            <person name="Connil N."/>
            <person name="Le Breton Y."/>
            <person name="Dousset X."/>
            <person name="Auffray Y."/>
            <person name="Rince A."/>
            <person name="Prevost H."/>
        </authorList>
    </citation>
    <scope>NUCLEOTIDE SEQUENCE [GENOMIC DNA]</scope>
    <source>
        <strain>TX4000 / JH2-2</strain>
    </source>
</reference>
<reference key="2">
    <citation type="submission" date="2010-09" db="EMBL/GenBank/DDBJ databases">
        <authorList>
            <person name="Weinstock G."/>
            <person name="Sodergren E."/>
            <person name="Clifton S."/>
            <person name="Fulton L."/>
            <person name="Fulton B."/>
            <person name="Courtney L."/>
            <person name="Fronick C."/>
            <person name="Harrison M."/>
            <person name="Strong C."/>
            <person name="Farmer C."/>
            <person name="Delahaunty K."/>
            <person name="Markovic C."/>
            <person name="Hall O."/>
            <person name="Minx P."/>
            <person name="Tomlinson C."/>
            <person name="Mitreva M."/>
            <person name="Hou S."/>
            <person name="Chen J."/>
            <person name="Wollam A."/>
            <person name="Pepin K.H."/>
            <person name="Johnson M."/>
            <person name="Bhonagiri V."/>
            <person name="Zhang X."/>
            <person name="Suruliraj S."/>
            <person name="Warren W."/>
            <person name="Chinwalla A."/>
            <person name="Mardis E.R."/>
            <person name="Wilson R.K."/>
        </authorList>
    </citation>
    <scope>NUCLEOTIDE SEQUENCE [LARGE SCALE GENOMIC DNA]</scope>
    <source>
        <strain>TX4000 / JH2-2</strain>
    </source>
</reference>
<protein>
    <recommendedName>
        <fullName evidence="1">Tyrosine--tRNA ligase 1</fullName>
        <ecNumber evidence="1">6.1.1.1</ecNumber>
    </recommendedName>
    <alternativeName>
        <fullName evidence="1">Tyrosyl-tRNA synthetase 1</fullName>
        <shortName evidence="1">TyrRS 1</shortName>
    </alternativeName>
</protein>
<proteinExistence type="inferred from homology"/>